<keyword id="KW-0131">Cell cycle</keyword>
<keyword id="KW-0539">Nucleus</keyword>
<keyword id="KW-0678">Repressor</keyword>
<keyword id="KW-0804">Transcription</keyword>
<keyword id="KW-0805">Transcription regulation</keyword>
<feature type="chain" id="PRO_0000380232" description="Retinoblastoma-related protein">
    <location>
        <begin position="1"/>
        <end position="1011"/>
    </location>
</feature>
<feature type="region of interest" description="Disordered" evidence="2">
    <location>
        <begin position="1"/>
        <end position="22"/>
    </location>
</feature>
<feature type="region of interest" description="Pocket" evidence="1">
    <location>
        <begin position="411"/>
        <end position="860"/>
    </location>
</feature>
<feature type="region of interest" description="Domain A" evidence="1">
    <location>
        <begin position="411"/>
        <end position="612"/>
    </location>
</feature>
<feature type="region of interest" description="Spacer" evidence="1">
    <location>
        <begin position="613"/>
        <end position="729"/>
    </location>
</feature>
<feature type="region of interest" description="Domain B" evidence="1">
    <location>
        <begin position="730"/>
        <end position="860"/>
    </location>
</feature>
<feature type="region of interest" description="Disordered" evidence="2">
    <location>
        <begin position="872"/>
        <end position="903"/>
    </location>
</feature>
<feature type="compositionally biased region" description="Polar residues" evidence="2">
    <location>
        <begin position="873"/>
        <end position="889"/>
    </location>
</feature>
<accession>Q8H252</accession>
<gene>
    <name type="primary">Rb1</name>
</gene>
<reference key="1">
    <citation type="submission" date="2002-10" db="EMBL/GenBank/DDBJ databases">
        <title>A coconut cDNA encoding a member of the retinoblastoma protein family: Characterization of its expression in tissues showing different meristematic capacity.</title>
        <authorList>
            <person name="Hocher V.R."/>
            <person name="Sandoval Esquivez A."/>
            <person name="Farinas B.T."/>
            <person name="Tregear J.W."/>
            <person name="Morcillo F."/>
            <person name="Verdeil J.-L."/>
        </authorList>
    </citation>
    <scope>NUCLEOTIDE SEQUENCE [MRNA]</scope>
    <source>
        <strain>cv. Malayan Yellow Dwarf</strain>
        <tissue>Shoot meristem</tissue>
    </source>
</reference>
<proteinExistence type="evidence at transcript level"/>
<name>RBR_COCNU</name>
<evidence type="ECO:0000250" key="1"/>
<evidence type="ECO:0000256" key="2">
    <source>
        <dbReference type="SAM" id="MobiDB-lite"/>
    </source>
</evidence>
<evidence type="ECO:0000305" key="3"/>
<comment type="function">
    <text evidence="1">Regulator of biological processes that recruits a histone deacetylase to control gene transcription. May play a role in the entry into mitosis, negatively regulating the cell proliferation. Formation of stable complexes with geminiviridae replication-associated proteins may create a cellular environment which favors viral DNA replication (By similarity).</text>
</comment>
<comment type="subcellular location">
    <subcellularLocation>
        <location evidence="1">Nucleus</location>
    </subcellularLocation>
</comment>
<comment type="similarity">
    <text evidence="3">Belongs to the retinoblastoma protein (RB) family.</text>
</comment>
<organism>
    <name type="scientific">Cocos nucifera</name>
    <name type="common">Coconut palm</name>
    <dbReference type="NCBI Taxonomy" id="13894"/>
    <lineage>
        <taxon>Eukaryota</taxon>
        <taxon>Viridiplantae</taxon>
        <taxon>Streptophyta</taxon>
        <taxon>Embryophyta</taxon>
        <taxon>Tracheophyta</taxon>
        <taxon>Spermatophyta</taxon>
        <taxon>Magnoliopsida</taxon>
        <taxon>Liliopsida</taxon>
        <taxon>Arecaceae</taxon>
        <taxon>Arecoideae</taxon>
        <taxon>Cocoseae</taxon>
        <taxon>Attaleinae</taxon>
        <taxon>Cocos</taxon>
    </lineage>
</organism>
<protein>
    <recommendedName>
        <fullName>Retinoblastoma-related protein</fullName>
    </recommendedName>
</protein>
<dbReference type="EMBL" id="AY117036">
    <property type="protein sequence ID" value="AAM77469.1"/>
    <property type="molecule type" value="mRNA"/>
</dbReference>
<dbReference type="SMR" id="Q8H252"/>
<dbReference type="OrthoDB" id="844594at2759"/>
<dbReference type="GO" id="GO:0000785">
    <property type="term" value="C:chromatin"/>
    <property type="evidence" value="ECO:0007669"/>
    <property type="project" value="TreeGrafter"/>
</dbReference>
<dbReference type="GO" id="GO:0005634">
    <property type="term" value="C:nucleus"/>
    <property type="evidence" value="ECO:0007669"/>
    <property type="project" value="UniProtKB-SubCell"/>
</dbReference>
<dbReference type="GO" id="GO:0005667">
    <property type="term" value="C:transcription regulator complex"/>
    <property type="evidence" value="ECO:0007669"/>
    <property type="project" value="TreeGrafter"/>
</dbReference>
<dbReference type="GO" id="GO:0000977">
    <property type="term" value="F:RNA polymerase II transcription regulatory region sequence-specific DNA binding"/>
    <property type="evidence" value="ECO:0007669"/>
    <property type="project" value="TreeGrafter"/>
</dbReference>
<dbReference type="GO" id="GO:0030154">
    <property type="term" value="P:cell differentiation"/>
    <property type="evidence" value="ECO:0007669"/>
    <property type="project" value="TreeGrafter"/>
</dbReference>
<dbReference type="GO" id="GO:2000134">
    <property type="term" value="P:negative regulation of G1/S transition of mitotic cell cycle"/>
    <property type="evidence" value="ECO:0007669"/>
    <property type="project" value="TreeGrafter"/>
</dbReference>
<dbReference type="GO" id="GO:0006357">
    <property type="term" value="P:regulation of transcription by RNA polymerase II"/>
    <property type="evidence" value="ECO:0007669"/>
    <property type="project" value="InterPro"/>
</dbReference>
<dbReference type="CDD" id="cd20601">
    <property type="entry name" value="CYCLIN_AtRBR_like"/>
    <property type="match status" value="1"/>
</dbReference>
<dbReference type="FunFam" id="1.10.472.10:FF:000030">
    <property type="entry name" value="Retinoblastoma-related protein 1"/>
    <property type="match status" value="1"/>
</dbReference>
<dbReference type="FunFam" id="1.10.472.10:FF:000067">
    <property type="entry name" value="Retinoblastoma-related protein 1"/>
    <property type="match status" value="1"/>
</dbReference>
<dbReference type="FunFam" id="1.10.472.140:FF:000003">
    <property type="entry name" value="Retinoblastoma-related protein 1"/>
    <property type="match status" value="1"/>
</dbReference>
<dbReference type="Gene3D" id="1.10.472.140">
    <property type="match status" value="1"/>
</dbReference>
<dbReference type="Gene3D" id="1.10.472.10">
    <property type="entry name" value="Cyclin-like"/>
    <property type="match status" value="2"/>
</dbReference>
<dbReference type="InterPro" id="IPR036915">
    <property type="entry name" value="Cyclin-like_sf"/>
</dbReference>
<dbReference type="InterPro" id="IPR002720">
    <property type="entry name" value="RB_A"/>
</dbReference>
<dbReference type="InterPro" id="IPR002719">
    <property type="entry name" value="RB_B"/>
</dbReference>
<dbReference type="InterPro" id="IPR015030">
    <property type="entry name" value="RB_C"/>
</dbReference>
<dbReference type="InterPro" id="IPR028309">
    <property type="entry name" value="RB_fam"/>
</dbReference>
<dbReference type="InterPro" id="IPR024599">
    <property type="entry name" value="RB_N"/>
</dbReference>
<dbReference type="PANTHER" id="PTHR13742:SF17">
    <property type="entry name" value="RE32990P-RELATED"/>
    <property type="match status" value="1"/>
</dbReference>
<dbReference type="PANTHER" id="PTHR13742">
    <property type="entry name" value="RETINOBLASTOMA-ASSOCIATED PROTEIN RB -RELATED"/>
    <property type="match status" value="1"/>
</dbReference>
<dbReference type="Pfam" id="PF11934">
    <property type="entry name" value="DUF3452"/>
    <property type="match status" value="1"/>
</dbReference>
<dbReference type="Pfam" id="PF01858">
    <property type="entry name" value="RB_A"/>
    <property type="match status" value="1"/>
</dbReference>
<dbReference type="Pfam" id="PF01857">
    <property type="entry name" value="RB_B"/>
    <property type="match status" value="1"/>
</dbReference>
<dbReference type="SMART" id="SM01367">
    <property type="entry name" value="DUF3452"/>
    <property type="match status" value="1"/>
</dbReference>
<dbReference type="SMART" id="SM01368">
    <property type="entry name" value="RB_A"/>
    <property type="match status" value="1"/>
</dbReference>
<dbReference type="SMART" id="SM01369">
    <property type="entry name" value="Rb_C"/>
    <property type="match status" value="1"/>
</dbReference>
<dbReference type="SUPFAM" id="SSF47954">
    <property type="entry name" value="Cyclin-like"/>
    <property type="match status" value="2"/>
</dbReference>
<sequence>MSQASVDMEDVKPSISLPSDDGGAMEARLTDVCKSKLALDESTMRQAMILFRESKHILLANMSAIGSGSPEEIERFWSAFVLYCVTRLSKGRTKQEKEENGITLCRILRVLKMNVVDFFKEIPQFCLKAGYILTGLYGSDWEKRLELKELQANIVHLSLLSRYYKRAYQELFLPNDASSGRHSVAPNSVGYVSDYHHFGWLLFLALRIHAFSRFKDLVTCTNGLVSILAILILHIPARFRNFHIQDSLLFAKRTAKGVDLVASLCDKYHTSEDELRRVMEKANNLIVDILKKKPCAASECKRENLAYINTDGLIYFEDLLEENSLQSSILILEDNYDDAINSKGELDERMFVNDEDSLLGSGSLSGGSIKMKRKYDAMASPAKSITSPLSPPLSPASPVNGNPVIKMVPITPVSTAMTTAKWLRNIISPLPSRPSTELLCFFSSCDRDITTDVTRRASIILGAIFPTTSFGDCCISGNLQSVNQMDSIWAEQRKVEAMKLYYRVLETMCRAESHILNGNNLTSLLSNDRFHRCMLACSAELVLATHKTVTMMFPAVLEKTGITAFDLSKVIESFVRHEETLPRELKRHLNSLEERLLESMAWERGSSMYNSLIVARPTLAAEINRLGLLAEPMPSLDAIAVHNNISTGGLPPLPFQKHEHSSDQNGGAVSPKRACSEYRSVLVERNSFTSPVKELTLTLNLKSKLPPLQSAFASPTRPNPAGGGETCAETGINIFFNKIVKLAAIRIRSLCERLQLPQQILEWVYCLIQQILSQRTALFFNRHIDQIILCSFYGVAKISQMALTFKEIIYNYRKQPQCKPQVFRSVFVHWPSTSHNGKTGQEHVDIITFYNEVFIPSVKPLLVELGPAGVAQKSKSSPEDSNNADSQIPGSPRLSPFPNLPDMSPKKVSAAHNVYVSPLRSSKMDALLSPSSKSYYACVGESTHAYQSPSKDLTAINNRLNSGRKVSGRLNFDVVSDSVVAGSLGAQNGSSAPAPACSILELPVKREQPDS</sequence>